<comment type="function">
    <text evidence="1">Is required not only for elongation of protein synthesis but also for the initiation of all mRNA translation through initiator tRNA(fMet) aminoacylation.</text>
</comment>
<comment type="catalytic activity">
    <reaction evidence="1">
        <text>tRNA(Met) + L-methionine + ATP = L-methionyl-tRNA(Met) + AMP + diphosphate</text>
        <dbReference type="Rhea" id="RHEA:13481"/>
        <dbReference type="Rhea" id="RHEA-COMP:9667"/>
        <dbReference type="Rhea" id="RHEA-COMP:9698"/>
        <dbReference type="ChEBI" id="CHEBI:30616"/>
        <dbReference type="ChEBI" id="CHEBI:33019"/>
        <dbReference type="ChEBI" id="CHEBI:57844"/>
        <dbReference type="ChEBI" id="CHEBI:78442"/>
        <dbReference type="ChEBI" id="CHEBI:78530"/>
        <dbReference type="ChEBI" id="CHEBI:456215"/>
        <dbReference type="EC" id="6.1.1.10"/>
    </reaction>
</comment>
<comment type="cofactor">
    <cofactor evidence="1">
        <name>Zn(2+)</name>
        <dbReference type="ChEBI" id="CHEBI:29105"/>
    </cofactor>
    <text evidence="1">Binds 1 zinc ion per subunit.</text>
</comment>
<comment type="subunit">
    <text evidence="1">Homodimer.</text>
</comment>
<comment type="subcellular location">
    <subcellularLocation>
        <location evidence="1">Cytoplasm</location>
    </subcellularLocation>
</comment>
<comment type="similarity">
    <text evidence="1">Belongs to the class-I aminoacyl-tRNA synthetase family. MetG type 1 subfamily.</text>
</comment>
<dbReference type="EC" id="6.1.1.10" evidence="1"/>
<dbReference type="EMBL" id="CP000103">
    <property type="protein sequence ID" value="ABB75231.1"/>
    <property type="molecule type" value="Genomic_DNA"/>
</dbReference>
<dbReference type="RefSeq" id="WP_011381251.1">
    <property type="nucleotide sequence ID" value="NC_007614.1"/>
</dbReference>
<dbReference type="SMR" id="Q2Y7P0"/>
<dbReference type="STRING" id="323848.Nmul_A1936"/>
<dbReference type="KEGG" id="nmu:Nmul_A1936"/>
<dbReference type="eggNOG" id="COG0073">
    <property type="taxonomic scope" value="Bacteria"/>
</dbReference>
<dbReference type="eggNOG" id="COG0143">
    <property type="taxonomic scope" value="Bacteria"/>
</dbReference>
<dbReference type="HOGENOM" id="CLU_009710_7_0_4"/>
<dbReference type="OrthoDB" id="9810191at2"/>
<dbReference type="Proteomes" id="UP000002718">
    <property type="component" value="Chromosome"/>
</dbReference>
<dbReference type="GO" id="GO:0005829">
    <property type="term" value="C:cytosol"/>
    <property type="evidence" value="ECO:0007669"/>
    <property type="project" value="TreeGrafter"/>
</dbReference>
<dbReference type="GO" id="GO:0005524">
    <property type="term" value="F:ATP binding"/>
    <property type="evidence" value="ECO:0007669"/>
    <property type="project" value="UniProtKB-UniRule"/>
</dbReference>
<dbReference type="GO" id="GO:0046872">
    <property type="term" value="F:metal ion binding"/>
    <property type="evidence" value="ECO:0007669"/>
    <property type="project" value="UniProtKB-KW"/>
</dbReference>
<dbReference type="GO" id="GO:0004825">
    <property type="term" value="F:methionine-tRNA ligase activity"/>
    <property type="evidence" value="ECO:0007669"/>
    <property type="project" value="UniProtKB-UniRule"/>
</dbReference>
<dbReference type="GO" id="GO:0000049">
    <property type="term" value="F:tRNA binding"/>
    <property type="evidence" value="ECO:0007669"/>
    <property type="project" value="UniProtKB-KW"/>
</dbReference>
<dbReference type="GO" id="GO:0006431">
    <property type="term" value="P:methionyl-tRNA aminoacylation"/>
    <property type="evidence" value="ECO:0007669"/>
    <property type="project" value="UniProtKB-UniRule"/>
</dbReference>
<dbReference type="CDD" id="cd07957">
    <property type="entry name" value="Anticodon_Ia_Met"/>
    <property type="match status" value="1"/>
</dbReference>
<dbReference type="CDD" id="cd00814">
    <property type="entry name" value="MetRS_core"/>
    <property type="match status" value="1"/>
</dbReference>
<dbReference type="CDD" id="cd02800">
    <property type="entry name" value="tRNA_bind_EcMetRS_like"/>
    <property type="match status" value="1"/>
</dbReference>
<dbReference type="FunFam" id="2.20.28.20:FF:000001">
    <property type="entry name" value="Methionine--tRNA ligase"/>
    <property type="match status" value="1"/>
</dbReference>
<dbReference type="FunFam" id="2.40.50.140:FF:000042">
    <property type="entry name" value="Methionine--tRNA ligase"/>
    <property type="match status" value="1"/>
</dbReference>
<dbReference type="Gene3D" id="3.40.50.620">
    <property type="entry name" value="HUPs"/>
    <property type="match status" value="1"/>
</dbReference>
<dbReference type="Gene3D" id="1.10.730.10">
    <property type="entry name" value="Isoleucyl-tRNA Synthetase, Domain 1"/>
    <property type="match status" value="1"/>
</dbReference>
<dbReference type="Gene3D" id="2.20.28.20">
    <property type="entry name" value="Methionyl-tRNA synthetase, Zn-domain"/>
    <property type="match status" value="1"/>
</dbReference>
<dbReference type="Gene3D" id="2.40.50.140">
    <property type="entry name" value="Nucleic acid-binding proteins"/>
    <property type="match status" value="1"/>
</dbReference>
<dbReference type="HAMAP" id="MF_00098">
    <property type="entry name" value="Met_tRNA_synth_type1"/>
    <property type="match status" value="1"/>
</dbReference>
<dbReference type="InterPro" id="IPR001412">
    <property type="entry name" value="aa-tRNA-synth_I_CS"/>
</dbReference>
<dbReference type="InterPro" id="IPR041872">
    <property type="entry name" value="Anticodon_Met"/>
</dbReference>
<dbReference type="InterPro" id="IPR004495">
    <property type="entry name" value="Met-tRNA-synth_bsu_C"/>
</dbReference>
<dbReference type="InterPro" id="IPR023458">
    <property type="entry name" value="Met-tRNA_ligase_1"/>
</dbReference>
<dbReference type="InterPro" id="IPR014758">
    <property type="entry name" value="Met-tRNA_synth"/>
</dbReference>
<dbReference type="InterPro" id="IPR015413">
    <property type="entry name" value="Methionyl/Leucyl_tRNA_Synth"/>
</dbReference>
<dbReference type="InterPro" id="IPR033911">
    <property type="entry name" value="MetRS_core"/>
</dbReference>
<dbReference type="InterPro" id="IPR029038">
    <property type="entry name" value="MetRS_Zn"/>
</dbReference>
<dbReference type="InterPro" id="IPR012340">
    <property type="entry name" value="NA-bd_OB-fold"/>
</dbReference>
<dbReference type="InterPro" id="IPR014729">
    <property type="entry name" value="Rossmann-like_a/b/a_fold"/>
</dbReference>
<dbReference type="InterPro" id="IPR002547">
    <property type="entry name" value="tRNA-bd_dom"/>
</dbReference>
<dbReference type="InterPro" id="IPR009080">
    <property type="entry name" value="tRNAsynth_Ia_anticodon-bd"/>
</dbReference>
<dbReference type="NCBIfam" id="TIGR00398">
    <property type="entry name" value="metG"/>
    <property type="match status" value="1"/>
</dbReference>
<dbReference type="NCBIfam" id="TIGR00399">
    <property type="entry name" value="metG_C_term"/>
    <property type="match status" value="1"/>
</dbReference>
<dbReference type="NCBIfam" id="NF001100">
    <property type="entry name" value="PRK00133.1"/>
    <property type="match status" value="1"/>
</dbReference>
<dbReference type="PANTHER" id="PTHR45765">
    <property type="entry name" value="METHIONINE--TRNA LIGASE"/>
    <property type="match status" value="1"/>
</dbReference>
<dbReference type="PANTHER" id="PTHR45765:SF1">
    <property type="entry name" value="METHIONINE--TRNA LIGASE, CYTOPLASMIC"/>
    <property type="match status" value="1"/>
</dbReference>
<dbReference type="Pfam" id="PF19303">
    <property type="entry name" value="Anticodon_3"/>
    <property type="match status" value="1"/>
</dbReference>
<dbReference type="Pfam" id="PF09334">
    <property type="entry name" value="tRNA-synt_1g"/>
    <property type="match status" value="1"/>
</dbReference>
<dbReference type="Pfam" id="PF01588">
    <property type="entry name" value="tRNA_bind"/>
    <property type="match status" value="1"/>
</dbReference>
<dbReference type="PRINTS" id="PR01041">
    <property type="entry name" value="TRNASYNTHMET"/>
</dbReference>
<dbReference type="SUPFAM" id="SSF47323">
    <property type="entry name" value="Anticodon-binding domain of a subclass of class I aminoacyl-tRNA synthetases"/>
    <property type="match status" value="1"/>
</dbReference>
<dbReference type="SUPFAM" id="SSF57770">
    <property type="entry name" value="Methionyl-tRNA synthetase (MetRS), Zn-domain"/>
    <property type="match status" value="1"/>
</dbReference>
<dbReference type="SUPFAM" id="SSF50249">
    <property type="entry name" value="Nucleic acid-binding proteins"/>
    <property type="match status" value="1"/>
</dbReference>
<dbReference type="SUPFAM" id="SSF52374">
    <property type="entry name" value="Nucleotidylyl transferase"/>
    <property type="match status" value="1"/>
</dbReference>
<dbReference type="PROSITE" id="PS00178">
    <property type="entry name" value="AA_TRNA_LIGASE_I"/>
    <property type="match status" value="1"/>
</dbReference>
<dbReference type="PROSITE" id="PS50886">
    <property type="entry name" value="TRBD"/>
    <property type="match status" value="1"/>
</dbReference>
<proteinExistence type="inferred from homology"/>
<name>SYM_NITMU</name>
<sequence length="728" mass="82633">MNKRKILVTSALPYANGSIHLGHLVEYIQTDIWVRFQKMQEHEVHYVCADDAHGTPIMLRAEQEGITPRQLIDRVWHEHKTDFDGFHIGFDHYYTTDSPENQAFCEDIYRQLRAGELIAKRSVEQFYDPVKQMFLPDRYIKGECPRCHAGDQYGDSCEACGATYLPTDLISPYSAVSGARPERRTSNHYFFKLSDVRCEAFLKNWIFESIPAQPGVALETRPRLQPEAANKMNEWLSAGLVDWDISRDAPYFGFPIPRTGGKKFFYVWLDAPVGYFGSFKNYFKQNQRTQAEIDEFLRPGGNTEMVHFIGKDILYFHALFWPAMLEFSGYRTPTQIYAHGFLTVNGQKMSKSRGTFITAESYLKQGLNPEWLRYYYAAKLNDSMEDIDLSFEDFVARVNSDLVGKYVNIASRCAGFITKKFGGELTHNVSEASRKWFNQFLFCELGEGDTFLGRHMSIANFYERREYSKAIKEIMSAADVANQYVDRMKPWVLAKDSRNDRELHEVCSVALNMFRMLTVYLKPVLPKLAMEAEQFLGLDPLTWKDANSQHRLLPDGHRINDYQHLMTRIDPKQIEMLTHANKESLAPAKSQQVAQAVETMEKNSSTTPAPAKEGEAGQASASTISIEDFGKIDLRVAKILDAEHVPGADKLLKLTLDVASEQRTVFAGIKSAYDPGQLKGRLTVMVANLAPRKMKFGISEGMVLAAGDGEGPYLLSPDEGARPGMKVK</sequence>
<organism>
    <name type="scientific">Nitrosospira multiformis (strain ATCC 25196 / NCIMB 11849 / C 71)</name>
    <dbReference type="NCBI Taxonomy" id="323848"/>
    <lineage>
        <taxon>Bacteria</taxon>
        <taxon>Pseudomonadati</taxon>
        <taxon>Pseudomonadota</taxon>
        <taxon>Betaproteobacteria</taxon>
        <taxon>Nitrosomonadales</taxon>
        <taxon>Nitrosomonadaceae</taxon>
        <taxon>Nitrosospira</taxon>
    </lineage>
</organism>
<reference key="1">
    <citation type="submission" date="2005-08" db="EMBL/GenBank/DDBJ databases">
        <title>Complete sequence of chromosome 1 of Nitrosospira multiformis ATCC 25196.</title>
        <authorList>
            <person name="Copeland A."/>
            <person name="Lucas S."/>
            <person name="Lapidus A."/>
            <person name="Barry K."/>
            <person name="Detter J.C."/>
            <person name="Glavina T."/>
            <person name="Hammon N."/>
            <person name="Israni S."/>
            <person name="Pitluck S."/>
            <person name="Chain P."/>
            <person name="Malfatti S."/>
            <person name="Shin M."/>
            <person name="Vergez L."/>
            <person name="Schmutz J."/>
            <person name="Larimer F."/>
            <person name="Land M."/>
            <person name="Hauser L."/>
            <person name="Kyrpides N."/>
            <person name="Lykidis A."/>
            <person name="Richardson P."/>
        </authorList>
    </citation>
    <scope>NUCLEOTIDE SEQUENCE [LARGE SCALE GENOMIC DNA]</scope>
    <source>
        <strain>ATCC 25196 / NCIMB 11849 / C 71</strain>
    </source>
</reference>
<accession>Q2Y7P0</accession>
<gene>
    <name evidence="1" type="primary">metG</name>
    <name type="ordered locus">Nmul_A1936</name>
</gene>
<keyword id="KW-0030">Aminoacyl-tRNA synthetase</keyword>
<keyword id="KW-0067">ATP-binding</keyword>
<keyword id="KW-0963">Cytoplasm</keyword>
<keyword id="KW-0436">Ligase</keyword>
<keyword id="KW-0479">Metal-binding</keyword>
<keyword id="KW-0547">Nucleotide-binding</keyword>
<keyword id="KW-0648">Protein biosynthesis</keyword>
<keyword id="KW-1185">Reference proteome</keyword>
<keyword id="KW-0694">RNA-binding</keyword>
<keyword id="KW-0820">tRNA-binding</keyword>
<keyword id="KW-0862">Zinc</keyword>
<protein>
    <recommendedName>
        <fullName evidence="1">Methionine--tRNA ligase</fullName>
        <ecNumber evidence="1">6.1.1.10</ecNumber>
    </recommendedName>
    <alternativeName>
        <fullName evidence="1">Methionyl-tRNA synthetase</fullName>
        <shortName evidence="1">MetRS</shortName>
    </alternativeName>
</protein>
<evidence type="ECO:0000255" key="1">
    <source>
        <dbReference type="HAMAP-Rule" id="MF_00098"/>
    </source>
</evidence>
<evidence type="ECO:0000256" key="2">
    <source>
        <dbReference type="SAM" id="MobiDB-lite"/>
    </source>
</evidence>
<feature type="chain" id="PRO_0000331857" description="Methionine--tRNA ligase">
    <location>
        <begin position="1"/>
        <end position="728"/>
    </location>
</feature>
<feature type="domain" description="tRNA-binding" evidence="1">
    <location>
        <begin position="628"/>
        <end position="728"/>
    </location>
</feature>
<feature type="region of interest" description="Disordered" evidence="2">
    <location>
        <begin position="585"/>
        <end position="620"/>
    </location>
</feature>
<feature type="short sequence motif" description="'HIGH' region">
    <location>
        <begin position="13"/>
        <end position="23"/>
    </location>
</feature>
<feature type="short sequence motif" description="'KMSKS' region">
    <location>
        <begin position="348"/>
        <end position="352"/>
    </location>
</feature>
<feature type="binding site" evidence="1">
    <location>
        <position position="144"/>
    </location>
    <ligand>
        <name>Zn(2+)</name>
        <dbReference type="ChEBI" id="CHEBI:29105"/>
    </ligand>
</feature>
<feature type="binding site" evidence="1">
    <location>
        <position position="147"/>
    </location>
    <ligand>
        <name>Zn(2+)</name>
        <dbReference type="ChEBI" id="CHEBI:29105"/>
    </ligand>
</feature>
<feature type="binding site" evidence="1">
    <location>
        <position position="157"/>
    </location>
    <ligand>
        <name>Zn(2+)</name>
        <dbReference type="ChEBI" id="CHEBI:29105"/>
    </ligand>
</feature>
<feature type="binding site" evidence="1">
    <location>
        <position position="160"/>
    </location>
    <ligand>
        <name>Zn(2+)</name>
        <dbReference type="ChEBI" id="CHEBI:29105"/>
    </ligand>
</feature>
<feature type="binding site" evidence="1">
    <location>
        <position position="351"/>
    </location>
    <ligand>
        <name>ATP</name>
        <dbReference type="ChEBI" id="CHEBI:30616"/>
    </ligand>
</feature>